<evidence type="ECO:0000255" key="1">
    <source>
        <dbReference type="HAMAP-Rule" id="MF_00675"/>
    </source>
</evidence>
<protein>
    <recommendedName>
        <fullName evidence="1">Uronate isomerase</fullName>
        <ecNumber evidence="1">5.3.1.12</ecNumber>
    </recommendedName>
    <alternativeName>
        <fullName evidence="1">Glucuronate isomerase</fullName>
    </alternativeName>
    <alternativeName>
        <fullName evidence="1">Uronic isomerase</fullName>
    </alternativeName>
</protein>
<name>UXAC_SHOC1</name>
<reference key="1">
    <citation type="submission" date="2003-10" db="EMBL/GenBank/DDBJ databases">
        <title>The complete genome sequence of the alkaliphilic Bacillus clausii KSM-K16.</title>
        <authorList>
            <person name="Takaki Y."/>
            <person name="Kageyama Y."/>
            <person name="Shimamura S."/>
            <person name="Suzuki H."/>
            <person name="Nishi S."/>
            <person name="Hatada Y."/>
            <person name="Kawai S."/>
            <person name="Ito S."/>
            <person name="Horikoshi K."/>
        </authorList>
    </citation>
    <scope>NUCLEOTIDE SEQUENCE [LARGE SCALE GENOMIC DNA]</scope>
    <source>
        <strain>KSM-K16</strain>
    </source>
</reference>
<comment type="catalytic activity">
    <reaction evidence="1">
        <text>D-glucuronate = D-fructuronate</text>
        <dbReference type="Rhea" id="RHEA:13049"/>
        <dbReference type="ChEBI" id="CHEBI:58720"/>
        <dbReference type="ChEBI" id="CHEBI:59863"/>
        <dbReference type="EC" id="5.3.1.12"/>
    </reaction>
</comment>
<comment type="catalytic activity">
    <reaction evidence="1">
        <text>aldehydo-D-galacturonate = keto-D-tagaturonate</text>
        <dbReference type="Rhea" id="RHEA:27702"/>
        <dbReference type="ChEBI" id="CHEBI:12952"/>
        <dbReference type="ChEBI" id="CHEBI:17886"/>
        <dbReference type="EC" id="5.3.1.12"/>
    </reaction>
</comment>
<comment type="pathway">
    <text evidence="1">Carbohydrate metabolism; pentose and glucuronate interconversion.</text>
</comment>
<comment type="similarity">
    <text evidence="1">Belongs to the metallo-dependent hydrolases superfamily. Uronate isomerase family.</text>
</comment>
<sequence>MISTGKAFIHENFMLQNKTAETLYHTYAKTLPIIDYHCHVPPQEIAENRQFNNISEIWLHGDHYKWRAMRAVGVEETFITGDGDDKEKFLKWAETVPYTMGNPLYHWTHLELKRYFGIDELLSSETAEAIWSATKEQLAAPERSVQGIIKESNVKVICTTDDPSDHLEAHQQIRKEGACQAAVYPAFRPDKALVASAPSFVPYLETLGAAAEVDISSLRSLLEALEKRATFFAEEGCVLSDHGLRTLPFVDTTEKEAEAAFQKALNQETLTPQEEEKYQTYVLLFLARLYNKLGWTMQFHLGALRNNNSRMVEQVGPDSGFDSMADDRFAESLNRFLNELERTNELPKTILYTLNPIFNEVIATTIGNFQGGGIPGKIQFGSGWWFNDTKDGMEKQMTDLANNGLLSLFVGMLTDSRSFLSYTRHEYFRRILCNRIGEWVERGEWPADEKWLGKVVEDISYYNAKRYFAFPK</sequence>
<accession>Q5WJC1</accession>
<gene>
    <name evidence="1" type="primary">uxaC</name>
    <name type="ordered locus">ABC0995</name>
</gene>
<keyword id="KW-0413">Isomerase</keyword>
<keyword id="KW-1185">Reference proteome</keyword>
<proteinExistence type="inferred from homology"/>
<feature type="chain" id="PRO_0000172760" description="Uronate isomerase">
    <location>
        <begin position="1"/>
        <end position="472"/>
    </location>
</feature>
<dbReference type="EC" id="5.3.1.12" evidence="1"/>
<dbReference type="EMBL" id="AP006627">
    <property type="protein sequence ID" value="BAD63534.1"/>
    <property type="molecule type" value="Genomic_DNA"/>
</dbReference>
<dbReference type="RefSeq" id="WP_011245850.1">
    <property type="nucleotide sequence ID" value="NC_006582.1"/>
</dbReference>
<dbReference type="SMR" id="Q5WJC1"/>
<dbReference type="STRING" id="66692.ABC0995"/>
<dbReference type="KEGG" id="bcl:ABC0995"/>
<dbReference type="eggNOG" id="COG1904">
    <property type="taxonomic scope" value="Bacteria"/>
</dbReference>
<dbReference type="HOGENOM" id="CLU_044465_1_0_9"/>
<dbReference type="OrthoDB" id="9766564at2"/>
<dbReference type="UniPathway" id="UPA00246"/>
<dbReference type="Proteomes" id="UP000001168">
    <property type="component" value="Chromosome"/>
</dbReference>
<dbReference type="GO" id="GO:0008880">
    <property type="term" value="F:glucuronate isomerase activity"/>
    <property type="evidence" value="ECO:0007669"/>
    <property type="project" value="UniProtKB-UniRule"/>
</dbReference>
<dbReference type="GO" id="GO:0019698">
    <property type="term" value="P:D-galacturonate catabolic process"/>
    <property type="evidence" value="ECO:0007669"/>
    <property type="project" value="TreeGrafter"/>
</dbReference>
<dbReference type="GO" id="GO:0042840">
    <property type="term" value="P:D-glucuronate catabolic process"/>
    <property type="evidence" value="ECO:0007669"/>
    <property type="project" value="TreeGrafter"/>
</dbReference>
<dbReference type="Gene3D" id="3.20.20.140">
    <property type="entry name" value="Metal-dependent hydrolases"/>
    <property type="match status" value="1"/>
</dbReference>
<dbReference type="Gene3D" id="1.10.2020.10">
    <property type="entry name" value="uronate isomerase, domain 2, chain A"/>
    <property type="match status" value="1"/>
</dbReference>
<dbReference type="HAMAP" id="MF_00675">
    <property type="entry name" value="UxaC"/>
    <property type="match status" value="1"/>
</dbReference>
<dbReference type="InterPro" id="IPR032466">
    <property type="entry name" value="Metal_Hydrolase"/>
</dbReference>
<dbReference type="InterPro" id="IPR003766">
    <property type="entry name" value="Uronate_isomerase"/>
</dbReference>
<dbReference type="NCBIfam" id="NF002794">
    <property type="entry name" value="PRK02925.1"/>
    <property type="match status" value="1"/>
</dbReference>
<dbReference type="PANTHER" id="PTHR30068">
    <property type="entry name" value="URONATE ISOMERASE"/>
    <property type="match status" value="1"/>
</dbReference>
<dbReference type="PANTHER" id="PTHR30068:SF4">
    <property type="entry name" value="URONATE ISOMERASE"/>
    <property type="match status" value="1"/>
</dbReference>
<dbReference type="Pfam" id="PF02614">
    <property type="entry name" value="UxaC"/>
    <property type="match status" value="1"/>
</dbReference>
<dbReference type="SUPFAM" id="SSF51556">
    <property type="entry name" value="Metallo-dependent hydrolases"/>
    <property type="match status" value="1"/>
</dbReference>
<organism>
    <name type="scientific">Shouchella clausii (strain KSM-K16)</name>
    <name type="common">Alkalihalobacillus clausii</name>
    <dbReference type="NCBI Taxonomy" id="66692"/>
    <lineage>
        <taxon>Bacteria</taxon>
        <taxon>Bacillati</taxon>
        <taxon>Bacillota</taxon>
        <taxon>Bacilli</taxon>
        <taxon>Bacillales</taxon>
        <taxon>Bacillaceae</taxon>
        <taxon>Shouchella</taxon>
    </lineage>
</organism>